<organism>
    <name type="scientific">Pseudomonas aeruginosa (strain ATCC 15692 / DSM 22644 / CIP 104116 / JCM 14847 / LMG 12228 / 1C / PRS 101 / PAO1)</name>
    <dbReference type="NCBI Taxonomy" id="208964"/>
    <lineage>
        <taxon>Bacteria</taxon>
        <taxon>Pseudomonadati</taxon>
        <taxon>Pseudomonadota</taxon>
        <taxon>Gammaproteobacteria</taxon>
        <taxon>Pseudomonadales</taxon>
        <taxon>Pseudomonadaceae</taxon>
        <taxon>Pseudomonas</taxon>
    </lineage>
</organism>
<comment type="function">
    <text evidence="1">Forms part of the ribosomal stalk, playing a central role in the interaction of the ribosome with GTP-bound translation factors.</text>
</comment>
<comment type="subunit">
    <text evidence="1">Part of the ribosomal stalk of the 50S ribosomal subunit. The N-terminus interacts with L11 and the large rRNA to form the base of the stalk. The C-terminus forms an elongated spine to which L12 dimers bind in a sequential fashion forming a multimeric L10(L12)X complex (By similarity).</text>
</comment>
<comment type="similarity">
    <text evidence="2">Belongs to the universal ribosomal protein uL10 family.</text>
</comment>
<feature type="chain" id="PRO_0000154690" description="Large ribosomal subunit protein uL10">
    <location>
        <begin position="1"/>
        <end position="166"/>
    </location>
</feature>
<keyword id="KW-0002">3D-structure</keyword>
<keyword id="KW-1185">Reference proteome</keyword>
<keyword id="KW-0687">Ribonucleoprotein</keyword>
<keyword id="KW-0689">Ribosomal protein</keyword>
<keyword id="KW-0694">RNA-binding</keyword>
<keyword id="KW-0699">rRNA-binding</keyword>
<gene>
    <name type="primary">rplJ</name>
    <name type="ordered locus">PA4272</name>
</gene>
<sequence length="166" mass="17634">MAIKLEDKKAIVAEVNEAAKAALSAVVADARGVTVGAMTGLRKEAREAGVYVKVVRNTLLKRAVEGTQFDVLNDVFKGPTLIAFSNEHPGAAARIFREFAKGQDKFEIKAAAFEGQFLAANQIDVLASLPTYDEAVSQLMSVIQGATSKLARTLAAIRDQKEAAAA</sequence>
<name>RL10_PSEAE</name>
<evidence type="ECO:0000250" key="1"/>
<evidence type="ECO:0000305" key="2"/>
<accession>Q9HWC7</accession>
<proteinExistence type="evidence at protein level"/>
<protein>
    <recommendedName>
        <fullName evidence="2">Large ribosomal subunit protein uL10</fullName>
    </recommendedName>
    <alternativeName>
        <fullName>50S ribosomal protein L10</fullName>
    </alternativeName>
</protein>
<dbReference type="EMBL" id="AE004091">
    <property type="protein sequence ID" value="AAG07660.1"/>
    <property type="molecule type" value="Genomic_DNA"/>
</dbReference>
<dbReference type="PIR" id="A83111">
    <property type="entry name" value="A83111"/>
</dbReference>
<dbReference type="RefSeq" id="NP_252962.1">
    <property type="nucleotide sequence ID" value="NC_002516.2"/>
</dbReference>
<dbReference type="RefSeq" id="WP_003093748.1">
    <property type="nucleotide sequence ID" value="NZ_QZGE01000028.1"/>
</dbReference>
<dbReference type="PDB" id="7UNR">
    <property type="method" value="EM"/>
    <property type="resolution" value="2.90 A"/>
    <property type="chains" value="I=1-166"/>
</dbReference>
<dbReference type="PDB" id="7UNU">
    <property type="method" value="EM"/>
    <property type="resolution" value="2.90 A"/>
    <property type="chains" value="I=1-166"/>
</dbReference>
<dbReference type="PDB" id="7UNV">
    <property type="method" value="EM"/>
    <property type="resolution" value="2.70 A"/>
    <property type="chains" value="I=1-166"/>
</dbReference>
<dbReference type="PDB" id="7UNW">
    <property type="method" value="EM"/>
    <property type="resolution" value="2.60 A"/>
    <property type="chains" value="I=1-166"/>
</dbReference>
<dbReference type="PDBsum" id="7UNR"/>
<dbReference type="PDBsum" id="7UNU"/>
<dbReference type="PDBsum" id="7UNV"/>
<dbReference type="PDBsum" id="7UNW"/>
<dbReference type="EMDB" id="EMD-26630"/>
<dbReference type="EMDB" id="EMD-26633"/>
<dbReference type="EMDB" id="EMD-26634"/>
<dbReference type="EMDB" id="EMD-26635"/>
<dbReference type="SMR" id="Q9HWC7"/>
<dbReference type="FunCoup" id="Q9HWC7">
    <property type="interactions" value="758"/>
</dbReference>
<dbReference type="STRING" id="208964.PA4272"/>
<dbReference type="PaxDb" id="208964-PA4272"/>
<dbReference type="GeneID" id="77219189"/>
<dbReference type="GeneID" id="881702"/>
<dbReference type="KEGG" id="pae:PA4272"/>
<dbReference type="PATRIC" id="fig|208964.12.peg.4473"/>
<dbReference type="PseudoCAP" id="PA4272"/>
<dbReference type="HOGENOM" id="CLU_092227_0_2_6"/>
<dbReference type="InParanoid" id="Q9HWC7"/>
<dbReference type="OrthoDB" id="9808307at2"/>
<dbReference type="PhylomeDB" id="Q9HWC7"/>
<dbReference type="BioCyc" id="PAER208964:G1FZ6-4346-MONOMER"/>
<dbReference type="PRO" id="PR:Q9HWC7"/>
<dbReference type="Proteomes" id="UP000002438">
    <property type="component" value="Chromosome"/>
</dbReference>
<dbReference type="GO" id="GO:0022625">
    <property type="term" value="C:cytosolic large ribosomal subunit"/>
    <property type="evidence" value="ECO:0000318"/>
    <property type="project" value="GO_Central"/>
</dbReference>
<dbReference type="GO" id="GO:0070180">
    <property type="term" value="F:large ribosomal subunit rRNA binding"/>
    <property type="evidence" value="ECO:0007669"/>
    <property type="project" value="UniProtKB-UniRule"/>
</dbReference>
<dbReference type="GO" id="GO:0003735">
    <property type="term" value="F:structural constituent of ribosome"/>
    <property type="evidence" value="ECO:0000318"/>
    <property type="project" value="GO_Central"/>
</dbReference>
<dbReference type="GO" id="GO:0006412">
    <property type="term" value="P:translation"/>
    <property type="evidence" value="ECO:0000318"/>
    <property type="project" value="GO_Central"/>
</dbReference>
<dbReference type="CDD" id="cd05797">
    <property type="entry name" value="Ribosomal_L10"/>
    <property type="match status" value="1"/>
</dbReference>
<dbReference type="FunFam" id="3.30.70.1730:FF:000001">
    <property type="entry name" value="50S ribosomal protein L10"/>
    <property type="match status" value="1"/>
</dbReference>
<dbReference type="Gene3D" id="3.30.70.1730">
    <property type="match status" value="1"/>
</dbReference>
<dbReference type="Gene3D" id="6.10.250.2350">
    <property type="match status" value="1"/>
</dbReference>
<dbReference type="HAMAP" id="MF_00362">
    <property type="entry name" value="Ribosomal_uL10"/>
    <property type="match status" value="1"/>
</dbReference>
<dbReference type="InterPro" id="IPR001790">
    <property type="entry name" value="Ribosomal_uL10"/>
</dbReference>
<dbReference type="InterPro" id="IPR043141">
    <property type="entry name" value="Ribosomal_uL10-like_sf"/>
</dbReference>
<dbReference type="InterPro" id="IPR022973">
    <property type="entry name" value="Ribosomal_uL10_bac"/>
</dbReference>
<dbReference type="InterPro" id="IPR047865">
    <property type="entry name" value="Ribosomal_uL10_bac_type"/>
</dbReference>
<dbReference type="InterPro" id="IPR002363">
    <property type="entry name" value="Ribosomal_uL10_CS_bac"/>
</dbReference>
<dbReference type="NCBIfam" id="NF000955">
    <property type="entry name" value="PRK00099.1-1"/>
    <property type="match status" value="1"/>
</dbReference>
<dbReference type="PANTHER" id="PTHR11560">
    <property type="entry name" value="39S RIBOSOMAL PROTEIN L10, MITOCHONDRIAL"/>
    <property type="match status" value="1"/>
</dbReference>
<dbReference type="Pfam" id="PF00466">
    <property type="entry name" value="Ribosomal_L10"/>
    <property type="match status" value="1"/>
</dbReference>
<dbReference type="SUPFAM" id="SSF160369">
    <property type="entry name" value="Ribosomal protein L10-like"/>
    <property type="match status" value="1"/>
</dbReference>
<dbReference type="PROSITE" id="PS01109">
    <property type="entry name" value="RIBOSOMAL_L10"/>
    <property type="match status" value="1"/>
</dbReference>
<reference key="1">
    <citation type="journal article" date="2000" name="Nature">
        <title>Complete genome sequence of Pseudomonas aeruginosa PAO1, an opportunistic pathogen.</title>
        <authorList>
            <person name="Stover C.K."/>
            <person name="Pham X.-Q.T."/>
            <person name="Erwin A.L."/>
            <person name="Mizoguchi S.D."/>
            <person name="Warrener P."/>
            <person name="Hickey M.J."/>
            <person name="Brinkman F.S.L."/>
            <person name="Hufnagle W.O."/>
            <person name="Kowalik D.J."/>
            <person name="Lagrou M."/>
            <person name="Garber R.L."/>
            <person name="Goltry L."/>
            <person name="Tolentino E."/>
            <person name="Westbrock-Wadman S."/>
            <person name="Yuan Y."/>
            <person name="Brody L.L."/>
            <person name="Coulter S.N."/>
            <person name="Folger K.R."/>
            <person name="Kas A."/>
            <person name="Larbig K."/>
            <person name="Lim R.M."/>
            <person name="Smith K.A."/>
            <person name="Spencer D.H."/>
            <person name="Wong G.K.-S."/>
            <person name="Wu Z."/>
            <person name="Paulsen I.T."/>
            <person name="Reizer J."/>
            <person name="Saier M.H. Jr."/>
            <person name="Hancock R.E.W."/>
            <person name="Lory S."/>
            <person name="Olson M.V."/>
        </authorList>
    </citation>
    <scope>NUCLEOTIDE SEQUENCE [LARGE SCALE GENOMIC DNA]</scope>
    <source>
        <strain>ATCC 15692 / DSM 22644 / CIP 104116 / JCM 14847 / LMG 12228 / 1C / PRS 101 / PAO1</strain>
    </source>
</reference>